<proteinExistence type="evidence at protein level"/>
<reference evidence="10" key="1">
    <citation type="journal article" date="1998" name="Science">
        <title>Genome sequence of the nematode C. elegans: a platform for investigating biology.</title>
        <authorList>
            <consortium name="The C. elegans sequencing consortium"/>
        </authorList>
    </citation>
    <scope>NUCLEOTIDE SEQUENCE [LARGE SCALE GENOMIC DNA]</scope>
    <source>
        <strain evidence="10">Bristol N2</strain>
    </source>
</reference>
<reference evidence="7" key="2">
    <citation type="journal article" date="2010" name="Dev. Biol.">
        <title>UNC-83 coordinates kinesin-1 and dynein activities at the nuclear envelope during nuclear migration.</title>
        <authorList>
            <person name="Fridolfsson H.N."/>
            <person name="Ly N."/>
            <person name="Meyerzon M."/>
            <person name="Starr D.A."/>
        </authorList>
    </citation>
    <scope>FUNCTION</scope>
    <scope>IDENTIFICATION IN A COMPLEX WITH DLC-1 AND EGAL-1</scope>
    <scope>INTERACTION WITH EGAL-1 AND UNC-83</scope>
    <scope>SUBCELLULAR LOCATION</scope>
    <scope>DEVELOPMENTAL STAGE</scope>
</reference>
<reference evidence="7" key="3">
    <citation type="journal article" date="2011" name="Development">
        <title>C. elegans bicd-1, homolog of the Drosophila dynein accessory factor Bicaudal D, regulates the branching of PVD sensory neuron dendrites.</title>
        <authorList>
            <person name="Aguirre-Chen C."/>
            <person name="Buelow H.E."/>
            <person name="Kaprielian Z."/>
        </authorList>
    </citation>
    <scope>FUNCTION</scope>
    <scope>SUBCELLULAR LOCATION</scope>
    <scope>TISSUE SPECIFICITY</scope>
    <scope>DISRUPTION PHENOTYPE</scope>
</reference>
<reference key="4">
    <citation type="journal article" date="2016" name="Development">
        <title>Nuclei migrate through constricted spaces using microtubule motors and actin networks in C. elegans hypodermal cells.</title>
        <authorList>
            <person name="Bone C.R."/>
            <person name="Chang Y.T."/>
            <person name="Cain N.E."/>
            <person name="Murphy S.P."/>
            <person name="Starr D.A."/>
        </authorList>
    </citation>
    <scope>FUNCTION</scope>
    <scope>DISRUPTION PHENOTYPE</scope>
</reference>
<sequence>MAESELEKLRQDIAILTEKYEQAKEDIHKAANAGLELLRQKEDLEKRLAEMQAELDLARTEIDKTNQTLAEYRSQHQRSTRSELENEESLLEESSAKEEEYLQRIAKLEADLKKKEQELAEKKEELESIEKKHSKEIDSGAALEDERRKLRAELKETKEREQRLISEYSELEEENIGLQKTVANLRGSQVEYESLRIDNNRLEETIEIMKMAAEEDEILRVIADKQLEEALLTAQQERDQRLAMKRELEQTRNAEHISSLNDMLFGLERLGEDGELPPPQPGASDLFSELQGSSDVKVRELEAAKEGLQEELKSREKIFIEFVTGLADTLNIHRPTNELDYMHARQQKDVVLEKIQNIARDTDRHDKEGEEKRSGILKADLRTLVLVAGEKSAQLAAAQDAMIQVSDQLYQFYHQMTQNQGVQTEKSVQEIVKKLRLLARANAEDVPRVSLADEGVESGTETDVNASRSIPLNSDRLVIAPSFAKEIEKKLASVKIGDVLSETDLRQRILTEGNAISETTESLKKMIQVVKRTSEQAFNQAVMASGAENEIEMQNMKLRSLLSTKRDQISTLRTVLKSNKLTAESALTSMREKYESEKKMMMEINDKMRRELKQLKEDAATFASHRAMFTARGEELKSKVEELSNELRANEEEKKTLNQLLRLAIQQKLTLTQRLEEVEVDRDRQVFKRSSTRAPTRETYQPPRAVRYPGSTTTAQQPAPSSSGGSRGGPRRGDNQQ</sequence>
<accession>V6CJ04</accession>
<accession>V6CK55</accession>
<evidence type="ECO:0000255" key="1"/>
<evidence type="ECO:0000256" key="2">
    <source>
        <dbReference type="SAM" id="MobiDB-lite"/>
    </source>
</evidence>
<evidence type="ECO:0000269" key="3">
    <source>
    </source>
</evidence>
<evidence type="ECO:0000269" key="4">
    <source>
    </source>
</evidence>
<evidence type="ECO:0000269" key="5">
    <source>
    </source>
</evidence>
<evidence type="ECO:0000303" key="6">
    <source>
    </source>
</evidence>
<evidence type="ECO:0000305" key="7"/>
<evidence type="ECO:0000305" key="8">
    <source>
    </source>
</evidence>
<evidence type="ECO:0000305" key="9">
    <source>
    </source>
</evidence>
<evidence type="ECO:0000312" key="10">
    <source>
        <dbReference type="Proteomes" id="UP000001940"/>
    </source>
</evidence>
<evidence type="ECO:0000312" key="11">
    <source>
        <dbReference type="WormBase" id="C43G2.2a"/>
    </source>
</evidence>
<evidence type="ECO:0000312" key="12">
    <source>
        <dbReference type="WormBase" id="C43G2.2b"/>
    </source>
</evidence>
<comment type="function">
    <text evidence="3 4 9">Part of a complex with dlc-1 and egal-1, which is recruited to the nuclear envelope by unc-83, where in turn, it recruits dynein to the nuclear surface and regulates nuclear migration in hypodermal precursor cells (Probable) (PubMed:20005871). Required for the formation of dendritic branches of PVD sensory neurons (PubMed:21205795).</text>
</comment>
<comment type="subunit">
    <text evidence="3">Component of a dynein-regulating complex composed of at least bicd-1, dlc-1 and egal-1. Interacts with egal-1 and unc-83.</text>
</comment>
<comment type="interaction">
    <interactant intactId="EBI-2006416">
        <id>V6CJ04</id>
    </interactant>
    <interactant intactId="EBI-328330">
        <id>Q17902</id>
        <label>egal-1</label>
    </interactant>
    <organismsDiffer>false</organismsDiffer>
    <experiments>2</experiments>
</comment>
<comment type="subcellular location">
    <subcellularLocation>
        <location evidence="8">Nucleus envelope</location>
    </subcellularLocation>
    <subcellularLocation>
        <location evidence="4">Perikaryon</location>
    </subcellularLocation>
    <subcellularLocation>
        <location evidence="4">Cell projection</location>
        <location evidence="4">Dendrite</location>
    </subcellularLocation>
    <text evidence="8">Probably recruited to the nuclear envelope by unc-83.</text>
</comment>
<comment type="alternative products">
    <event type="alternative splicing"/>
    <isoform>
        <id>V6CJ04-1</id>
        <name evidence="11">a</name>
        <sequence type="displayed"/>
    </isoform>
    <isoform>
        <id>V6CJ04-2</id>
        <name evidence="12">b</name>
        <sequence type="described" ref="VSP_059365"/>
    </isoform>
</comment>
<comment type="tissue specificity">
    <text evidence="4">Expressed in the excretory cell, body wall muscles, vulval muscle cells, PVD and FLP sensory neurons and AVF interneurons.</text>
</comment>
<comment type="developmental stage">
    <text evidence="3">Expressed during embryonic development.</text>
</comment>
<comment type="disruption phenotype">
    <text evidence="4 5">RNAi-mediated knockdown results in increased dendritic branch formation in PVD sensory neurons (PubMed:21205795). RNAi-mediated knockdown in a bicd-1 (ok949) mutant background results in failed nuclei migrations in larval hypodermal P-cells (PubMed:27697906).</text>
</comment>
<comment type="similarity">
    <text evidence="7">Belongs to the BicD family.</text>
</comment>
<name>BICD_CAEEL</name>
<organism evidence="10">
    <name type="scientific">Caenorhabditis elegans</name>
    <dbReference type="NCBI Taxonomy" id="6239"/>
    <lineage>
        <taxon>Eukaryota</taxon>
        <taxon>Metazoa</taxon>
        <taxon>Ecdysozoa</taxon>
        <taxon>Nematoda</taxon>
        <taxon>Chromadorea</taxon>
        <taxon>Rhabditida</taxon>
        <taxon>Rhabditina</taxon>
        <taxon>Rhabditomorpha</taxon>
        <taxon>Rhabditoidea</taxon>
        <taxon>Rhabditidae</taxon>
        <taxon>Peloderinae</taxon>
        <taxon>Caenorhabditis</taxon>
    </lineage>
</organism>
<gene>
    <name evidence="6 11" type="primary">bicd-1</name>
    <name evidence="11" type="ORF">C43G2.2</name>
</gene>
<dbReference type="EMBL" id="BX284604">
    <property type="protein sequence ID" value="CDK13418.1"/>
    <property type="molecule type" value="Genomic_DNA"/>
</dbReference>
<dbReference type="EMBL" id="BX284604">
    <property type="protein sequence ID" value="CDK13419.1"/>
    <property type="molecule type" value="Genomic_DNA"/>
</dbReference>
<dbReference type="RefSeq" id="NP_001293734.1">
    <molecule id="V6CJ04-1"/>
    <property type="nucleotide sequence ID" value="NM_001306805.2"/>
</dbReference>
<dbReference type="RefSeq" id="NP_001293735.1">
    <molecule id="V6CJ04-2"/>
    <property type="nucleotide sequence ID" value="NM_001306806.4"/>
</dbReference>
<dbReference type="SMR" id="V6CJ04"/>
<dbReference type="ComplexPortal" id="CPX-1388">
    <property type="entry name" value="bicd-1-dlc-1-egal-1 microtubule-associated dynein motor complex"/>
</dbReference>
<dbReference type="FunCoup" id="V6CJ04">
    <property type="interactions" value="2506"/>
</dbReference>
<dbReference type="IntAct" id="V6CJ04">
    <property type="interactions" value="6"/>
</dbReference>
<dbReference type="STRING" id="6239.C43G2.2a.1"/>
<dbReference type="PaxDb" id="6239-C43G2.2"/>
<dbReference type="PeptideAtlas" id="V6CJ04"/>
<dbReference type="EnsemblMetazoa" id="C43G2.2a.1">
    <molecule id="V6CJ04-1"/>
    <property type="protein sequence ID" value="C43G2.2a.1"/>
    <property type="gene ID" value="WBGene00016611"/>
</dbReference>
<dbReference type="EnsemblMetazoa" id="C43G2.2b.1">
    <molecule id="V6CJ04-2"/>
    <property type="protein sequence ID" value="C43G2.2b.1"/>
    <property type="gene ID" value="WBGene00016611"/>
</dbReference>
<dbReference type="GeneID" id="183417"/>
<dbReference type="KEGG" id="cel:CELE_C43G2.2"/>
<dbReference type="AGR" id="WB:WBGene00016611"/>
<dbReference type="CTD" id="183417"/>
<dbReference type="WormBase" id="C43G2.2a">
    <molecule id="V6CJ04-1"/>
    <property type="protein sequence ID" value="CE49379"/>
    <property type="gene ID" value="WBGene00016611"/>
    <property type="gene designation" value="bicd-1"/>
</dbReference>
<dbReference type="WormBase" id="C43G2.2b">
    <molecule id="V6CJ04-2"/>
    <property type="protein sequence ID" value="CE49263"/>
    <property type="gene ID" value="WBGene00016611"/>
    <property type="gene designation" value="bicd-1"/>
</dbReference>
<dbReference type="eggNOG" id="KOG0999">
    <property type="taxonomic scope" value="Eukaryota"/>
</dbReference>
<dbReference type="GeneTree" id="ENSGT00940000154471"/>
<dbReference type="InParanoid" id="V6CJ04"/>
<dbReference type="OMA" id="EVHINEI"/>
<dbReference type="OrthoDB" id="10069295at2759"/>
<dbReference type="Reactome" id="R-CEL-6811436">
    <property type="pathway name" value="COPI-independent Golgi-to-ER retrograde traffic"/>
</dbReference>
<dbReference type="PRO" id="PR:V6CJ04"/>
<dbReference type="Proteomes" id="UP000001940">
    <property type="component" value="Chromosome IV"/>
</dbReference>
<dbReference type="Bgee" id="WBGene00016611">
    <property type="expression patterns" value="Expressed in pharyngeal muscle cell (C elegans) and 3 other cell types or tissues"/>
</dbReference>
<dbReference type="GO" id="GO:0005829">
    <property type="term" value="C:cytosol"/>
    <property type="evidence" value="ECO:0000318"/>
    <property type="project" value="GO_Central"/>
</dbReference>
<dbReference type="GO" id="GO:0030425">
    <property type="term" value="C:dendrite"/>
    <property type="evidence" value="ECO:0000314"/>
    <property type="project" value="UniProtKB"/>
</dbReference>
<dbReference type="GO" id="GO:0005794">
    <property type="term" value="C:Golgi apparatus"/>
    <property type="evidence" value="ECO:0000318"/>
    <property type="project" value="GO_Central"/>
</dbReference>
<dbReference type="GO" id="GO:0005875">
    <property type="term" value="C:microtubule associated complex"/>
    <property type="evidence" value="ECO:0000303"/>
    <property type="project" value="ComplexPortal"/>
</dbReference>
<dbReference type="GO" id="GO:0043025">
    <property type="term" value="C:neuronal cell body"/>
    <property type="evidence" value="ECO:0000314"/>
    <property type="project" value="UniProtKB"/>
</dbReference>
<dbReference type="GO" id="GO:0005635">
    <property type="term" value="C:nuclear envelope"/>
    <property type="evidence" value="ECO:0007669"/>
    <property type="project" value="UniProtKB-SubCell"/>
</dbReference>
<dbReference type="GO" id="GO:0043204">
    <property type="term" value="C:perikaryon"/>
    <property type="evidence" value="ECO:0007669"/>
    <property type="project" value="UniProtKB-SubCell"/>
</dbReference>
<dbReference type="GO" id="GO:0008093">
    <property type="term" value="F:cytoskeletal anchor activity"/>
    <property type="evidence" value="ECO:0007669"/>
    <property type="project" value="InterPro"/>
</dbReference>
<dbReference type="GO" id="GO:0034452">
    <property type="term" value="F:dynactin binding"/>
    <property type="evidence" value="ECO:0000318"/>
    <property type="project" value="GO_Central"/>
</dbReference>
<dbReference type="GO" id="GO:0070840">
    <property type="term" value="F:dynein complex binding"/>
    <property type="evidence" value="ECO:0000318"/>
    <property type="project" value="GO_Central"/>
</dbReference>
<dbReference type="GO" id="GO:0072393">
    <property type="term" value="P:microtubule anchoring at microtubule organizing center"/>
    <property type="evidence" value="ECO:0000318"/>
    <property type="project" value="GO_Central"/>
</dbReference>
<dbReference type="GO" id="GO:0007399">
    <property type="term" value="P:nervous system development"/>
    <property type="evidence" value="ECO:0007669"/>
    <property type="project" value="UniProtKB-KW"/>
</dbReference>
<dbReference type="GO" id="GO:0030473">
    <property type="term" value="P:nuclear migration along microtubule"/>
    <property type="evidence" value="ECO:0000303"/>
    <property type="project" value="ComplexPortal"/>
</dbReference>
<dbReference type="GO" id="GO:0033365">
    <property type="term" value="P:protein localization to organelle"/>
    <property type="evidence" value="ECO:0000318"/>
    <property type="project" value="GO_Central"/>
</dbReference>
<dbReference type="GO" id="GO:0048814">
    <property type="term" value="P:regulation of dendrite morphogenesis"/>
    <property type="evidence" value="ECO:0000315"/>
    <property type="project" value="WormBase"/>
</dbReference>
<dbReference type="GO" id="GO:0070507">
    <property type="term" value="P:regulation of microtubule cytoskeleton organization"/>
    <property type="evidence" value="ECO:0000318"/>
    <property type="project" value="GO_Central"/>
</dbReference>
<dbReference type="Gene3D" id="6.10.250.2470">
    <property type="match status" value="1"/>
</dbReference>
<dbReference type="InterPro" id="IPR018477">
    <property type="entry name" value="BICD"/>
</dbReference>
<dbReference type="PANTHER" id="PTHR31233">
    <property type="entry name" value="BICAUDAL D FAMILY MEMBER"/>
    <property type="match status" value="1"/>
</dbReference>
<dbReference type="PANTHER" id="PTHR31233:SF6">
    <property type="entry name" value="PROTEIN BICAUDAL D"/>
    <property type="match status" value="1"/>
</dbReference>
<dbReference type="Pfam" id="PF09730">
    <property type="entry name" value="BicD"/>
    <property type="match status" value="2"/>
</dbReference>
<keyword id="KW-0025">Alternative splicing</keyword>
<keyword id="KW-0966">Cell projection</keyword>
<keyword id="KW-0175">Coiled coil</keyword>
<keyword id="KW-0524">Neurogenesis</keyword>
<keyword id="KW-0539">Nucleus</keyword>
<keyword id="KW-1185">Reference proteome</keyword>
<feature type="chain" id="PRO_0000443514" description="Protein bicaudal D homolog" evidence="7">
    <location>
        <begin position="1"/>
        <end position="737"/>
    </location>
</feature>
<feature type="region of interest" description="Disordered" evidence="2">
    <location>
        <begin position="72"/>
        <end position="97"/>
    </location>
</feature>
<feature type="region of interest" description="Disordered" evidence="2">
    <location>
        <begin position="686"/>
        <end position="737"/>
    </location>
</feature>
<feature type="coiled-coil region" evidence="1">
    <location>
        <begin position="1"/>
        <end position="255"/>
    </location>
</feature>
<feature type="coiled-coil region" evidence="1">
    <location>
        <begin position="292"/>
        <end position="319"/>
    </location>
</feature>
<feature type="coiled-coil region" evidence="1">
    <location>
        <begin position="547"/>
        <end position="684"/>
    </location>
</feature>
<feature type="compositionally biased region" description="Polar residues" evidence="2">
    <location>
        <begin position="710"/>
        <end position="719"/>
    </location>
</feature>
<feature type="splice variant" id="VSP_059365" description="In isoform b." evidence="7">
    <location>
        <begin position="686"/>
        <end position="698"/>
    </location>
</feature>
<protein>
    <recommendedName>
        <fullName evidence="7">Protein bicaudal D homolog</fullName>
    </recommendedName>
</protein>